<feature type="chain" id="PRO_1000193018" description="Phosphoribosylformylglycinamidine cyclo-ligase">
    <location>
        <begin position="1"/>
        <end position="345"/>
    </location>
</feature>
<proteinExistence type="inferred from homology"/>
<sequence>MTDKTSLSYKDAGVDIDAGNALVGRIKGVVKKTRRPEVMGGLGGFGALCALPQKYREPVLVSGTDGVGTKLRLAMDLKRHDTIGIDLVAMCVNDLVVQGAEPLFFLDYYATGKLDVDTASAVISGIAEGCLQSGCSLVGGETAEMPGMYHGEDYDVAGFCVGVVEKSEIIDGSKVSDGDVLIALGSSGPHSNGYSLVRKILEVSGCDPQTTELDGKPLADHLLAPTRIYVKSVLELIEKVDVNAIAHLTGGGFWENIPRVLPDNTQAVIDESSWQWPEVFNWLQTAGNVERHEMYRTFNCGVGMIIALPAPEVDKALALLNANGENAWKIGIIKASDSEQRVVIE</sequence>
<gene>
    <name evidence="1" type="primary">purM</name>
    <name type="ordered locus">ECH74115_3722</name>
</gene>
<evidence type="ECO:0000255" key="1">
    <source>
        <dbReference type="HAMAP-Rule" id="MF_00741"/>
    </source>
</evidence>
<reference key="1">
    <citation type="journal article" date="2011" name="Proc. Natl. Acad. Sci. U.S.A.">
        <title>Genomic anatomy of Escherichia coli O157:H7 outbreaks.</title>
        <authorList>
            <person name="Eppinger M."/>
            <person name="Mammel M.K."/>
            <person name="Leclerc J.E."/>
            <person name="Ravel J."/>
            <person name="Cebula T.A."/>
        </authorList>
    </citation>
    <scope>NUCLEOTIDE SEQUENCE [LARGE SCALE GENOMIC DNA]</scope>
    <source>
        <strain>EC4115 / EHEC</strain>
    </source>
</reference>
<organism>
    <name type="scientific">Escherichia coli O157:H7 (strain EC4115 / EHEC)</name>
    <dbReference type="NCBI Taxonomy" id="444450"/>
    <lineage>
        <taxon>Bacteria</taxon>
        <taxon>Pseudomonadati</taxon>
        <taxon>Pseudomonadota</taxon>
        <taxon>Gammaproteobacteria</taxon>
        <taxon>Enterobacterales</taxon>
        <taxon>Enterobacteriaceae</taxon>
        <taxon>Escherichia</taxon>
    </lineage>
</organism>
<protein>
    <recommendedName>
        <fullName evidence="1">Phosphoribosylformylglycinamidine cyclo-ligase</fullName>
        <ecNumber evidence="1">6.3.3.1</ecNumber>
    </recommendedName>
    <alternativeName>
        <fullName evidence="1">AIR synthase</fullName>
    </alternativeName>
    <alternativeName>
        <fullName evidence="1">AIRS</fullName>
    </alternativeName>
    <alternativeName>
        <fullName evidence="1">Phosphoribosyl-aminoimidazole synthetase</fullName>
    </alternativeName>
</protein>
<accession>B5Z036</accession>
<dbReference type="EC" id="6.3.3.1" evidence="1"/>
<dbReference type="EMBL" id="CP001164">
    <property type="protein sequence ID" value="ACI34818.1"/>
    <property type="molecule type" value="Genomic_DNA"/>
</dbReference>
<dbReference type="RefSeq" id="WP_001301832.1">
    <property type="nucleotide sequence ID" value="NC_011353.1"/>
</dbReference>
<dbReference type="SMR" id="B5Z036"/>
<dbReference type="KEGG" id="ecf:ECH74115_3722"/>
<dbReference type="HOGENOM" id="CLU_047116_0_0_6"/>
<dbReference type="UniPathway" id="UPA00074">
    <property type="reaction ID" value="UER00129"/>
</dbReference>
<dbReference type="GO" id="GO:0005829">
    <property type="term" value="C:cytosol"/>
    <property type="evidence" value="ECO:0007669"/>
    <property type="project" value="TreeGrafter"/>
</dbReference>
<dbReference type="GO" id="GO:0005524">
    <property type="term" value="F:ATP binding"/>
    <property type="evidence" value="ECO:0007669"/>
    <property type="project" value="UniProtKB-KW"/>
</dbReference>
<dbReference type="GO" id="GO:0004637">
    <property type="term" value="F:phosphoribosylamine-glycine ligase activity"/>
    <property type="evidence" value="ECO:0007669"/>
    <property type="project" value="TreeGrafter"/>
</dbReference>
<dbReference type="GO" id="GO:0004641">
    <property type="term" value="F:phosphoribosylformylglycinamidine cyclo-ligase activity"/>
    <property type="evidence" value="ECO:0007669"/>
    <property type="project" value="UniProtKB-UniRule"/>
</dbReference>
<dbReference type="GO" id="GO:0006189">
    <property type="term" value="P:'de novo' IMP biosynthetic process"/>
    <property type="evidence" value="ECO:0007669"/>
    <property type="project" value="UniProtKB-UniRule"/>
</dbReference>
<dbReference type="GO" id="GO:0046084">
    <property type="term" value="P:adenine biosynthetic process"/>
    <property type="evidence" value="ECO:0007669"/>
    <property type="project" value="TreeGrafter"/>
</dbReference>
<dbReference type="CDD" id="cd02196">
    <property type="entry name" value="PurM"/>
    <property type="match status" value="1"/>
</dbReference>
<dbReference type="FunFam" id="3.30.1330.10:FF:000001">
    <property type="entry name" value="Phosphoribosylformylglycinamidine cyclo-ligase"/>
    <property type="match status" value="1"/>
</dbReference>
<dbReference type="FunFam" id="3.90.650.10:FF:000001">
    <property type="entry name" value="Phosphoribosylformylglycinamidine cyclo-ligase"/>
    <property type="match status" value="1"/>
</dbReference>
<dbReference type="Gene3D" id="3.90.650.10">
    <property type="entry name" value="PurM-like C-terminal domain"/>
    <property type="match status" value="1"/>
</dbReference>
<dbReference type="Gene3D" id="3.30.1330.10">
    <property type="entry name" value="PurM-like, N-terminal domain"/>
    <property type="match status" value="1"/>
</dbReference>
<dbReference type="HAMAP" id="MF_00741">
    <property type="entry name" value="AIRS"/>
    <property type="match status" value="1"/>
</dbReference>
<dbReference type="InterPro" id="IPR010918">
    <property type="entry name" value="PurM-like_C_dom"/>
</dbReference>
<dbReference type="InterPro" id="IPR036676">
    <property type="entry name" value="PurM-like_C_sf"/>
</dbReference>
<dbReference type="InterPro" id="IPR016188">
    <property type="entry name" value="PurM-like_N"/>
</dbReference>
<dbReference type="InterPro" id="IPR036921">
    <property type="entry name" value="PurM-like_N_sf"/>
</dbReference>
<dbReference type="InterPro" id="IPR004733">
    <property type="entry name" value="PurM_cligase"/>
</dbReference>
<dbReference type="NCBIfam" id="TIGR00878">
    <property type="entry name" value="purM"/>
    <property type="match status" value="1"/>
</dbReference>
<dbReference type="PANTHER" id="PTHR10520:SF12">
    <property type="entry name" value="TRIFUNCTIONAL PURINE BIOSYNTHETIC PROTEIN ADENOSINE-3"/>
    <property type="match status" value="1"/>
</dbReference>
<dbReference type="PANTHER" id="PTHR10520">
    <property type="entry name" value="TRIFUNCTIONAL PURINE BIOSYNTHETIC PROTEIN ADENOSINE-3-RELATED"/>
    <property type="match status" value="1"/>
</dbReference>
<dbReference type="Pfam" id="PF00586">
    <property type="entry name" value="AIRS"/>
    <property type="match status" value="1"/>
</dbReference>
<dbReference type="Pfam" id="PF02769">
    <property type="entry name" value="AIRS_C"/>
    <property type="match status" value="1"/>
</dbReference>
<dbReference type="SUPFAM" id="SSF56042">
    <property type="entry name" value="PurM C-terminal domain-like"/>
    <property type="match status" value="1"/>
</dbReference>
<dbReference type="SUPFAM" id="SSF55326">
    <property type="entry name" value="PurM N-terminal domain-like"/>
    <property type="match status" value="1"/>
</dbReference>
<name>PUR5_ECO5E</name>
<comment type="catalytic activity">
    <reaction evidence="1">
        <text>2-formamido-N(1)-(5-O-phospho-beta-D-ribosyl)acetamidine + ATP = 5-amino-1-(5-phospho-beta-D-ribosyl)imidazole + ADP + phosphate + H(+)</text>
        <dbReference type="Rhea" id="RHEA:23032"/>
        <dbReference type="ChEBI" id="CHEBI:15378"/>
        <dbReference type="ChEBI" id="CHEBI:30616"/>
        <dbReference type="ChEBI" id="CHEBI:43474"/>
        <dbReference type="ChEBI" id="CHEBI:137981"/>
        <dbReference type="ChEBI" id="CHEBI:147287"/>
        <dbReference type="ChEBI" id="CHEBI:456216"/>
        <dbReference type="EC" id="6.3.3.1"/>
    </reaction>
</comment>
<comment type="pathway">
    <text evidence="1">Purine metabolism; IMP biosynthesis via de novo pathway; 5-amino-1-(5-phospho-D-ribosyl)imidazole from N(2)-formyl-N(1)-(5-phospho-D-ribosyl)glycinamide: step 2/2.</text>
</comment>
<comment type="subcellular location">
    <subcellularLocation>
        <location evidence="1">Cytoplasm</location>
    </subcellularLocation>
</comment>
<comment type="similarity">
    <text evidence="1">Belongs to the AIR synthase family.</text>
</comment>
<keyword id="KW-0067">ATP-binding</keyword>
<keyword id="KW-0963">Cytoplasm</keyword>
<keyword id="KW-0436">Ligase</keyword>
<keyword id="KW-0547">Nucleotide-binding</keyword>
<keyword id="KW-0658">Purine biosynthesis</keyword>